<organism>
    <name type="scientific">Francisella tularensis subsp. tularensis (strain WY96-3418)</name>
    <dbReference type="NCBI Taxonomy" id="418136"/>
    <lineage>
        <taxon>Bacteria</taxon>
        <taxon>Pseudomonadati</taxon>
        <taxon>Pseudomonadota</taxon>
        <taxon>Gammaproteobacteria</taxon>
        <taxon>Thiotrichales</taxon>
        <taxon>Francisellaceae</taxon>
        <taxon>Francisella</taxon>
    </lineage>
</organism>
<proteinExistence type="inferred from homology"/>
<comment type="function">
    <text evidence="2">With CysD forms the ATP sulfurylase (ATPS) that catalyzes the adenylation of sulfate producing adenosine 5'-phosphosulfate (APS) and diphosphate, the first enzymatic step in sulfur assimilation pathway. APS synthesis involves the formation of a high-energy phosphoric-sulfuric acid anhydride bond driven by GTP hydrolysis by CysN coupled to ATP hydrolysis by CysD.</text>
</comment>
<comment type="catalytic activity">
    <reaction evidence="2">
        <text>sulfate + ATP + H(+) = adenosine 5'-phosphosulfate + diphosphate</text>
        <dbReference type="Rhea" id="RHEA:18133"/>
        <dbReference type="ChEBI" id="CHEBI:15378"/>
        <dbReference type="ChEBI" id="CHEBI:16189"/>
        <dbReference type="ChEBI" id="CHEBI:30616"/>
        <dbReference type="ChEBI" id="CHEBI:33019"/>
        <dbReference type="ChEBI" id="CHEBI:58243"/>
        <dbReference type="EC" id="2.7.7.4"/>
    </reaction>
</comment>
<comment type="pathway">
    <text evidence="2">Sulfur metabolism; hydrogen sulfide biosynthesis; sulfite from sulfate: step 1/3.</text>
</comment>
<comment type="subunit">
    <text evidence="2">Heterodimer composed of CysD, the smaller subunit, and CysN.</text>
</comment>
<comment type="similarity">
    <text evidence="2">Belongs to the TRAFAC class translation factor GTPase superfamily. Classic translation factor GTPase family. CysN/NodQ subfamily.</text>
</comment>
<reference key="1">
    <citation type="journal article" date="2007" name="PLoS ONE">
        <title>Complete genomic characterization of a pathogenic A.II strain of Francisella tularensis subspecies tularensis.</title>
        <authorList>
            <person name="Beckstrom-Sternberg S.M."/>
            <person name="Auerbach R.K."/>
            <person name="Godbole S."/>
            <person name="Pearson J.V."/>
            <person name="Beckstrom-Sternberg J.S."/>
            <person name="Deng Z."/>
            <person name="Munk C."/>
            <person name="Kubota K."/>
            <person name="Zhou Y."/>
            <person name="Bruce D."/>
            <person name="Noronha J."/>
            <person name="Scheuermann R.H."/>
            <person name="Wang A."/>
            <person name="Wei X."/>
            <person name="Wang J."/>
            <person name="Hao J."/>
            <person name="Wagner D.M."/>
            <person name="Brettin T.S."/>
            <person name="Brown N."/>
            <person name="Gilna P."/>
            <person name="Keim P.S."/>
        </authorList>
    </citation>
    <scope>NUCLEOTIDE SEQUENCE [LARGE SCALE GENOMIC DNA]</scope>
    <source>
        <strain>WY96-3418</strain>
    </source>
</reference>
<feature type="chain" id="PRO_1000092145" description="Sulfate adenylyltransferase subunit 1">
    <location>
        <begin position="1"/>
        <end position="470"/>
    </location>
</feature>
<feature type="domain" description="tr-type G">
    <location>
        <begin position="22"/>
        <end position="238"/>
    </location>
</feature>
<feature type="region of interest" description="G1" evidence="1">
    <location>
        <begin position="31"/>
        <end position="38"/>
    </location>
</feature>
<feature type="region of interest" description="G2" evidence="1">
    <location>
        <begin position="89"/>
        <end position="93"/>
    </location>
</feature>
<feature type="region of interest" description="G3" evidence="1">
    <location>
        <begin position="110"/>
        <end position="113"/>
    </location>
</feature>
<feature type="region of interest" description="G4" evidence="1">
    <location>
        <begin position="165"/>
        <end position="168"/>
    </location>
</feature>
<feature type="region of interest" description="G5" evidence="1">
    <location>
        <begin position="202"/>
        <end position="204"/>
    </location>
</feature>
<feature type="binding site" evidence="2">
    <location>
        <begin position="31"/>
        <end position="38"/>
    </location>
    <ligand>
        <name>GTP</name>
        <dbReference type="ChEBI" id="CHEBI:37565"/>
    </ligand>
</feature>
<feature type="binding site" evidence="2">
    <location>
        <begin position="110"/>
        <end position="114"/>
    </location>
    <ligand>
        <name>GTP</name>
        <dbReference type="ChEBI" id="CHEBI:37565"/>
    </ligand>
</feature>
<feature type="binding site" evidence="2">
    <location>
        <begin position="165"/>
        <end position="168"/>
    </location>
    <ligand>
        <name>GTP</name>
        <dbReference type="ChEBI" id="CHEBI:37565"/>
    </ligand>
</feature>
<name>CYSN_FRATW</name>
<sequence>MSHKSDLIATNIQKYLQQRQQKELLRFITCGSVDDGKSTLMGRLLHDSKLIFEDQLASIVADSKKVGTQGDRLDLALLVDGLQSEREQGITIDVAYRYFSTDKRKFIIADTPGHEQYTRNMATGASNCDLAIILIDARKGLQTQTRRHSFICSLLGIKHVIVAVNKMDTVGYSQQIYKSIQDEYLKLAGSLQIPDIRFVPISALDGDNVVSKSPKMPWFRGSPLMHYLETIKIDYAYTDEFRFPVQLVCRPNSEFRGFQGTIVSGSAKIGDTIRVMPSGKITTIKSILSFDGELNEAEAGQSITITTYDEIDISRGDMIVHKDAISHVSSMLRANIVWMSEQPLIEYKDYYIKFLTKQVIGSVNKFNYKTDINTLKEVACGTLELNEIATIELKLSEPVCFDSYQKNRTTGAFIIIDRLTNVTAGAGMVIKPLAANDKKDSTNDYSEFELELNALIRKHFPHWDAKNLRE</sequence>
<gene>
    <name evidence="2" type="primary">cysN</name>
    <name type="ordered locus">FTW_0959</name>
</gene>
<evidence type="ECO:0000250" key="1"/>
<evidence type="ECO:0000255" key="2">
    <source>
        <dbReference type="HAMAP-Rule" id="MF_00062"/>
    </source>
</evidence>
<protein>
    <recommendedName>
        <fullName evidence="2">Sulfate adenylyltransferase subunit 1</fullName>
        <ecNumber evidence="2">2.7.7.4</ecNumber>
    </recommendedName>
    <alternativeName>
        <fullName evidence="2">ATP-sulfurylase large subunit</fullName>
    </alternativeName>
    <alternativeName>
        <fullName evidence="2">Sulfate adenylate transferase</fullName>
        <shortName evidence="2">SAT</shortName>
    </alternativeName>
</protein>
<accession>A4IXZ5</accession>
<dbReference type="EC" id="2.7.7.4" evidence="2"/>
<dbReference type="EMBL" id="CP000608">
    <property type="protein sequence ID" value="ABO46796.1"/>
    <property type="molecule type" value="Genomic_DNA"/>
</dbReference>
<dbReference type="RefSeq" id="WP_003026100.1">
    <property type="nucleotide sequence ID" value="NC_009257.1"/>
</dbReference>
<dbReference type="SMR" id="A4IXZ5"/>
<dbReference type="KEGG" id="ftw:FTW_0959"/>
<dbReference type="HOGENOM" id="CLU_007265_5_2_6"/>
<dbReference type="UniPathway" id="UPA00140">
    <property type="reaction ID" value="UER00204"/>
</dbReference>
<dbReference type="GO" id="GO:0005524">
    <property type="term" value="F:ATP binding"/>
    <property type="evidence" value="ECO:0007669"/>
    <property type="project" value="UniProtKB-KW"/>
</dbReference>
<dbReference type="GO" id="GO:0005525">
    <property type="term" value="F:GTP binding"/>
    <property type="evidence" value="ECO:0007669"/>
    <property type="project" value="UniProtKB-UniRule"/>
</dbReference>
<dbReference type="GO" id="GO:0003924">
    <property type="term" value="F:GTPase activity"/>
    <property type="evidence" value="ECO:0007669"/>
    <property type="project" value="InterPro"/>
</dbReference>
<dbReference type="GO" id="GO:0097216">
    <property type="term" value="F:guanosine tetraphosphate binding"/>
    <property type="evidence" value="ECO:0007669"/>
    <property type="project" value="UniProtKB-ARBA"/>
</dbReference>
<dbReference type="GO" id="GO:0004781">
    <property type="term" value="F:sulfate adenylyltransferase (ATP) activity"/>
    <property type="evidence" value="ECO:0007669"/>
    <property type="project" value="UniProtKB-UniRule"/>
</dbReference>
<dbReference type="GO" id="GO:0070814">
    <property type="term" value="P:hydrogen sulfide biosynthetic process"/>
    <property type="evidence" value="ECO:0007669"/>
    <property type="project" value="UniProtKB-UniRule"/>
</dbReference>
<dbReference type="GO" id="GO:0000103">
    <property type="term" value="P:sulfate assimilation"/>
    <property type="evidence" value="ECO:0007669"/>
    <property type="project" value="UniProtKB-UniRule"/>
</dbReference>
<dbReference type="CDD" id="cd04166">
    <property type="entry name" value="CysN_ATPS"/>
    <property type="match status" value="1"/>
</dbReference>
<dbReference type="CDD" id="cd03695">
    <property type="entry name" value="CysN_NodQ_II"/>
    <property type="match status" value="1"/>
</dbReference>
<dbReference type="CDD" id="cd04095">
    <property type="entry name" value="CysN_NoDQ_III"/>
    <property type="match status" value="1"/>
</dbReference>
<dbReference type="FunFam" id="3.40.50.300:FF:000119">
    <property type="entry name" value="Sulfate adenylyltransferase subunit 1"/>
    <property type="match status" value="1"/>
</dbReference>
<dbReference type="Gene3D" id="3.40.50.300">
    <property type="entry name" value="P-loop containing nucleotide triphosphate hydrolases"/>
    <property type="match status" value="1"/>
</dbReference>
<dbReference type="Gene3D" id="2.40.30.10">
    <property type="entry name" value="Translation factors"/>
    <property type="match status" value="2"/>
</dbReference>
<dbReference type="HAMAP" id="MF_00062">
    <property type="entry name" value="Sulf_adenylyltr_sub1"/>
    <property type="match status" value="1"/>
</dbReference>
<dbReference type="InterPro" id="IPR041757">
    <property type="entry name" value="CysN_GTP-bd"/>
</dbReference>
<dbReference type="InterPro" id="IPR044138">
    <property type="entry name" value="CysN_II"/>
</dbReference>
<dbReference type="InterPro" id="IPR044139">
    <property type="entry name" value="CysN_NoDQ_III"/>
</dbReference>
<dbReference type="InterPro" id="IPR004161">
    <property type="entry name" value="EFTu-like_2"/>
</dbReference>
<dbReference type="InterPro" id="IPR031157">
    <property type="entry name" value="G_TR_CS"/>
</dbReference>
<dbReference type="InterPro" id="IPR054696">
    <property type="entry name" value="GTP-eEF1A_C"/>
</dbReference>
<dbReference type="InterPro" id="IPR027417">
    <property type="entry name" value="P-loop_NTPase"/>
</dbReference>
<dbReference type="InterPro" id="IPR005225">
    <property type="entry name" value="Small_GTP-bd"/>
</dbReference>
<dbReference type="InterPro" id="IPR011779">
    <property type="entry name" value="SO4_adenylTrfase_lsu"/>
</dbReference>
<dbReference type="InterPro" id="IPR000795">
    <property type="entry name" value="T_Tr_GTP-bd_dom"/>
</dbReference>
<dbReference type="InterPro" id="IPR050100">
    <property type="entry name" value="TRAFAC_GTPase_members"/>
</dbReference>
<dbReference type="InterPro" id="IPR009000">
    <property type="entry name" value="Transl_B-barrel_sf"/>
</dbReference>
<dbReference type="InterPro" id="IPR009001">
    <property type="entry name" value="Transl_elong_EF1A/Init_IF2_C"/>
</dbReference>
<dbReference type="NCBIfam" id="TIGR02034">
    <property type="entry name" value="CysN"/>
    <property type="match status" value="1"/>
</dbReference>
<dbReference type="NCBIfam" id="NF003478">
    <property type="entry name" value="PRK05124.1"/>
    <property type="match status" value="1"/>
</dbReference>
<dbReference type="NCBIfam" id="TIGR00231">
    <property type="entry name" value="small_GTP"/>
    <property type="match status" value="1"/>
</dbReference>
<dbReference type="PANTHER" id="PTHR23115">
    <property type="entry name" value="TRANSLATION FACTOR"/>
    <property type="match status" value="1"/>
</dbReference>
<dbReference type="Pfam" id="PF22594">
    <property type="entry name" value="GTP-eEF1A_C"/>
    <property type="match status" value="1"/>
</dbReference>
<dbReference type="Pfam" id="PF00009">
    <property type="entry name" value="GTP_EFTU"/>
    <property type="match status" value="1"/>
</dbReference>
<dbReference type="Pfam" id="PF03144">
    <property type="entry name" value="GTP_EFTU_D2"/>
    <property type="match status" value="1"/>
</dbReference>
<dbReference type="PRINTS" id="PR00315">
    <property type="entry name" value="ELONGATNFCT"/>
</dbReference>
<dbReference type="SUPFAM" id="SSF50465">
    <property type="entry name" value="EF-Tu/eEF-1alpha/eIF2-gamma C-terminal domain"/>
    <property type="match status" value="1"/>
</dbReference>
<dbReference type="SUPFAM" id="SSF52540">
    <property type="entry name" value="P-loop containing nucleoside triphosphate hydrolases"/>
    <property type="match status" value="1"/>
</dbReference>
<dbReference type="SUPFAM" id="SSF50447">
    <property type="entry name" value="Translation proteins"/>
    <property type="match status" value="1"/>
</dbReference>
<dbReference type="PROSITE" id="PS00301">
    <property type="entry name" value="G_TR_1"/>
    <property type="match status" value="1"/>
</dbReference>
<dbReference type="PROSITE" id="PS51722">
    <property type="entry name" value="G_TR_2"/>
    <property type="match status" value="1"/>
</dbReference>
<keyword id="KW-0067">ATP-binding</keyword>
<keyword id="KW-0342">GTP-binding</keyword>
<keyword id="KW-0547">Nucleotide-binding</keyword>
<keyword id="KW-0548">Nucleotidyltransferase</keyword>
<keyword id="KW-0808">Transferase</keyword>